<sequence length="397" mass="42997">MTTLLNPYFGEFGGMYVPQILMPALRQLEEAFVSAQKDPEFQAQFNDLLKNYAGRPTALTKCQNITAGTNTTLYLKREDLLHGGAHKTNQVLGQALLAKRMGKTEIIAETGAGQHGVASALASALLGLKCRIYMGAKDVERQSPNVFRMRLMGAEVIPVHSGSATLKDACNEALRDWSGSYETAHYMLGTAAGPHPYPTIVREFQRMIGEETKAQILEREGRLPDAVIACVGGGSNAIGMFADFINETNVGLIGVEPGGHGIETGEHGAPLKHGRVGIYFGMKAPMMQTEDGQIEESYSISAGLDFPSVGPQHAYLNSTGRADYVSITDDEALEAFKTLCLHEGIIPALESSHALAHALKMMRENPEKEQLLVVNLSGRGDKDIFTVHDILKARGEI</sequence>
<comment type="function">
    <text evidence="1">The beta subunit is responsible for the synthesis of L-tryptophan from indole and L-serine.</text>
</comment>
<comment type="catalytic activity">
    <reaction evidence="1">
        <text>(1S,2R)-1-C-(indol-3-yl)glycerol 3-phosphate + L-serine = D-glyceraldehyde 3-phosphate + L-tryptophan + H2O</text>
        <dbReference type="Rhea" id="RHEA:10532"/>
        <dbReference type="ChEBI" id="CHEBI:15377"/>
        <dbReference type="ChEBI" id="CHEBI:33384"/>
        <dbReference type="ChEBI" id="CHEBI:57912"/>
        <dbReference type="ChEBI" id="CHEBI:58866"/>
        <dbReference type="ChEBI" id="CHEBI:59776"/>
        <dbReference type="EC" id="4.2.1.20"/>
    </reaction>
</comment>
<comment type="cofactor">
    <cofactor evidence="1">
        <name>pyridoxal 5'-phosphate</name>
        <dbReference type="ChEBI" id="CHEBI:597326"/>
    </cofactor>
</comment>
<comment type="pathway">
    <text evidence="1">Amino-acid biosynthesis; L-tryptophan biosynthesis; L-tryptophan from chorismate: step 5/5.</text>
</comment>
<comment type="subunit">
    <text evidence="1">Tetramer of two alpha and two beta chains.</text>
</comment>
<comment type="similarity">
    <text evidence="1">Belongs to the TrpB family.</text>
</comment>
<keyword id="KW-0028">Amino-acid biosynthesis</keyword>
<keyword id="KW-0057">Aromatic amino acid biosynthesis</keyword>
<keyword id="KW-0456">Lyase</keyword>
<keyword id="KW-0663">Pyridoxal phosphate</keyword>
<keyword id="KW-0822">Tryptophan biosynthesis</keyword>
<accession>B5YZP1</accession>
<feature type="chain" id="PRO_1000095785" description="Tryptophan synthase beta chain">
    <location>
        <begin position="1"/>
        <end position="397"/>
    </location>
</feature>
<feature type="modified residue" description="N6-(pyridoxal phosphate)lysine" evidence="1">
    <location>
        <position position="87"/>
    </location>
</feature>
<organism>
    <name type="scientific">Escherichia coli O157:H7 (strain EC4115 / EHEC)</name>
    <dbReference type="NCBI Taxonomy" id="444450"/>
    <lineage>
        <taxon>Bacteria</taxon>
        <taxon>Pseudomonadati</taxon>
        <taxon>Pseudomonadota</taxon>
        <taxon>Gammaproteobacteria</taxon>
        <taxon>Enterobacterales</taxon>
        <taxon>Enterobacteriaceae</taxon>
        <taxon>Escherichia</taxon>
    </lineage>
</organism>
<reference key="1">
    <citation type="journal article" date="2011" name="Proc. Natl. Acad. Sci. U.S.A.">
        <title>Genomic anatomy of Escherichia coli O157:H7 outbreaks.</title>
        <authorList>
            <person name="Eppinger M."/>
            <person name="Mammel M.K."/>
            <person name="Leclerc J.E."/>
            <person name="Ravel J."/>
            <person name="Cebula T.A."/>
        </authorList>
    </citation>
    <scope>NUCLEOTIDE SEQUENCE [LARGE SCALE GENOMIC DNA]</scope>
    <source>
        <strain>EC4115 / EHEC</strain>
    </source>
</reference>
<proteinExistence type="inferred from homology"/>
<name>TRPB_ECO5E</name>
<protein>
    <recommendedName>
        <fullName evidence="1">Tryptophan synthase beta chain</fullName>
        <ecNumber evidence="1">4.2.1.20</ecNumber>
    </recommendedName>
</protein>
<dbReference type="EC" id="4.2.1.20" evidence="1"/>
<dbReference type="EMBL" id="CP001164">
    <property type="protein sequence ID" value="ACI35311.1"/>
    <property type="molecule type" value="Genomic_DNA"/>
</dbReference>
<dbReference type="RefSeq" id="WP_000209521.1">
    <property type="nucleotide sequence ID" value="NC_011353.1"/>
</dbReference>
<dbReference type="SMR" id="B5YZP1"/>
<dbReference type="GeneID" id="93775380"/>
<dbReference type="KEGG" id="ecf:ECH74115_1893"/>
<dbReference type="HOGENOM" id="CLU_016734_3_1_6"/>
<dbReference type="UniPathway" id="UPA00035">
    <property type="reaction ID" value="UER00044"/>
</dbReference>
<dbReference type="GO" id="GO:0005737">
    <property type="term" value="C:cytoplasm"/>
    <property type="evidence" value="ECO:0007669"/>
    <property type="project" value="TreeGrafter"/>
</dbReference>
<dbReference type="GO" id="GO:0004834">
    <property type="term" value="F:tryptophan synthase activity"/>
    <property type="evidence" value="ECO:0007669"/>
    <property type="project" value="UniProtKB-UniRule"/>
</dbReference>
<dbReference type="CDD" id="cd06446">
    <property type="entry name" value="Trp-synth_B"/>
    <property type="match status" value="1"/>
</dbReference>
<dbReference type="FunFam" id="3.40.50.1100:FF:000001">
    <property type="entry name" value="Tryptophan synthase beta chain"/>
    <property type="match status" value="1"/>
</dbReference>
<dbReference type="FunFam" id="3.40.50.1100:FF:000004">
    <property type="entry name" value="Tryptophan synthase beta chain"/>
    <property type="match status" value="1"/>
</dbReference>
<dbReference type="Gene3D" id="3.40.50.1100">
    <property type="match status" value="2"/>
</dbReference>
<dbReference type="HAMAP" id="MF_00133">
    <property type="entry name" value="Trp_synth_beta"/>
    <property type="match status" value="1"/>
</dbReference>
<dbReference type="InterPro" id="IPR006653">
    <property type="entry name" value="Trp_synth_b_CS"/>
</dbReference>
<dbReference type="InterPro" id="IPR006654">
    <property type="entry name" value="Trp_synth_beta"/>
</dbReference>
<dbReference type="InterPro" id="IPR023026">
    <property type="entry name" value="Trp_synth_beta/beta-like"/>
</dbReference>
<dbReference type="InterPro" id="IPR001926">
    <property type="entry name" value="TrpB-like_PALP"/>
</dbReference>
<dbReference type="InterPro" id="IPR036052">
    <property type="entry name" value="TrpB-like_PALP_sf"/>
</dbReference>
<dbReference type="NCBIfam" id="TIGR00263">
    <property type="entry name" value="trpB"/>
    <property type="match status" value="1"/>
</dbReference>
<dbReference type="PANTHER" id="PTHR48077:SF3">
    <property type="entry name" value="TRYPTOPHAN SYNTHASE"/>
    <property type="match status" value="1"/>
</dbReference>
<dbReference type="PANTHER" id="PTHR48077">
    <property type="entry name" value="TRYPTOPHAN SYNTHASE-RELATED"/>
    <property type="match status" value="1"/>
</dbReference>
<dbReference type="Pfam" id="PF00291">
    <property type="entry name" value="PALP"/>
    <property type="match status" value="1"/>
</dbReference>
<dbReference type="PIRSF" id="PIRSF001413">
    <property type="entry name" value="Trp_syn_beta"/>
    <property type="match status" value="1"/>
</dbReference>
<dbReference type="SUPFAM" id="SSF53686">
    <property type="entry name" value="Tryptophan synthase beta subunit-like PLP-dependent enzymes"/>
    <property type="match status" value="1"/>
</dbReference>
<dbReference type="PROSITE" id="PS00168">
    <property type="entry name" value="TRP_SYNTHASE_BETA"/>
    <property type="match status" value="1"/>
</dbReference>
<evidence type="ECO:0000255" key="1">
    <source>
        <dbReference type="HAMAP-Rule" id="MF_00133"/>
    </source>
</evidence>
<gene>
    <name evidence="1" type="primary">trpB</name>
    <name type="ordered locus">ECH74115_1893</name>
</gene>